<protein>
    <recommendedName>
        <fullName evidence="9">Sterol regulatory element-binding protein 1</fullName>
        <shortName evidence="9">SREBP-1</shortName>
    </recommendedName>
    <alternativeName>
        <fullName evidence="8">Adipocyte determination and differentiation-dependent factor 1</fullName>
    </alternativeName>
    <alternativeName>
        <fullName evidence="9">Sterol regulatory element-binding transcription factor 1</fullName>
    </alternativeName>
    <component>
        <recommendedName>
            <fullName evidence="10">Processed sterol regulatory element-binding protein 1</fullName>
        </recommendedName>
        <alternativeName>
            <fullName evidence="10">Transcription factor SREBF1</fullName>
        </alternativeName>
    </component>
</protein>
<accession>O97676</accession>
<accession>Q1W0S6</accession>
<accession>Q6RIB9</accession>
<accession>Q7YS02</accession>
<sequence>MDEPPFTEAALEQALAEPCELDAALLTDIEDMLQLINNQDSDFPGLFDAPYAGVAGGTDPTSPDASSPGSPTPPPSTMSSPLEGFLGGARTPPPPPVSPTQPAPTPLKMYPSVPAFSPGPGIKEEPVPLTILQPPTPQPLSGALLPQSLPALAPPQLSPAPVLGYPSPPGSFSSATPPGSTSQTLPGLPLASLPGVLPVSVHTQVQSAAPQQLLTATATPVVSPGTTTVTSQIQQVPVLLQPHFIKADSLLLTTMKTDMGTPVKAAGIGSLAPGTAVQAAPLQTLVSGGTILATVPLVVDTDKLPINRLAAGGKALSSGQSRGEKRTAHNAIEKRYRSSINDKIIELKDLVVGTEAKLNKSAVLRKAIDYIRFLQQSNQKLKQENLSLRTAAHKSKSLKDLVSCSSGGRTDVPMEGVKPEVVDTLSPPPSDAGSPSQSSPLSLGSRGSSSGGSGSDSEPDSPVFEDSQMKPEQLPAPHGRGMLDRSRLALCVLVFLCLSCNPLASLMGSWALPGPSDATSAYHGPWRSVLGAEGRDGPGWVLWLLPPLVWLTNGLLVLLFLALLFVYGEPVTRPHSDPAVRFWRHRKQADLDLARGDFAQAAQQLWLALRALGRPLPTSHLDLACSLLWNLIRHLLQRLWVGRWLAGRAGGLRRDSALEADTRTSACDAALVYHKLHQLHTMGKYPGGHLDAANLALSALNLAECAGDALSVAVLAEVYVAAALRVKTSLPRALHFLTRFFLSSARQACLAQSGSVPVAMQWLCHPVGHRFFVDGDWAVCGAPRDSLYSVAGNPVDPLAQVTQLFREHLLEQALHCVAQPSPGPGSADGDREFSEALGFLQLLNSCCDTAGAPACSFSIASSTAATAGTDPVAKWWASLTAVVTHWLGRDEEAAERLYPLVEHLPRALQESERPLPRAALHSFKAARALLGRGKAESGSASLAMCEKASGYLQDSLAATPAGSSIDKAMQLLLCDLLLVARTSLWQRQKPPPPSQASQGSSSGAQASALELRGFQRDLSGLRRLAQSFRPAMRRVFLHEATARLMAGASPARTHQLLDRSLRRRAGPCGRGGAAAAAAAELEPRPTRREQAEALLLASCYLPPGFLSAPGQRVGMLAEAARTLEKLGDRRLLHDCQQMLMRLGGGTTVTSS</sequence>
<keyword id="KW-0010">Activator</keyword>
<keyword id="KW-0153">Cholesterol metabolism</keyword>
<keyword id="KW-0968">Cytoplasmic vesicle</keyword>
<keyword id="KW-0238">DNA-binding</keyword>
<keyword id="KW-0256">Endoplasmic reticulum</keyword>
<keyword id="KW-0333">Golgi apparatus</keyword>
<keyword id="KW-0443">Lipid metabolism</keyword>
<keyword id="KW-0472">Membrane</keyword>
<keyword id="KW-0539">Nucleus</keyword>
<keyword id="KW-0597">Phosphoprotein</keyword>
<keyword id="KW-1185">Reference proteome</keyword>
<keyword id="KW-0753">Steroid metabolism</keyword>
<keyword id="KW-1207">Sterol metabolism</keyword>
<keyword id="KW-0804">Transcription</keyword>
<keyword id="KW-0805">Transcription regulation</keyword>
<keyword id="KW-0812">Transmembrane</keyword>
<keyword id="KW-1133">Transmembrane helix</keyword>
<keyword id="KW-0832">Ubl conjugation</keyword>
<reference key="1">
    <citation type="submission" date="2003-12" db="EMBL/GenBank/DDBJ databases">
        <title>Pig ADD1 gene cloning and expression.</title>
        <authorList>
            <person name="Li C."/>
            <person name="Meng H."/>
            <person name="Zhao W."/>
            <person name="Pan Y."/>
        </authorList>
    </citation>
    <scope>NUCLEOTIDE SEQUENCE [MRNA]</scope>
    <source>
        <tissue>Liver</tissue>
    </source>
</reference>
<reference key="2">
    <citation type="submission" date="2003-05" db="EMBL/GenBank/DDBJ databases">
        <title>SREBP-1c mRNA levels in the pig uterus.</title>
        <authorList>
            <person name="Palin M.F."/>
            <person name="Beaudry D."/>
            <person name="Murphy B.D."/>
        </authorList>
    </citation>
    <scope>NUCLEOTIDE SEQUENCE [MRNA] OF 159-1151</scope>
    <source>
        <tissue>Uterus</tissue>
    </source>
</reference>
<reference key="3">
    <citation type="journal article" date="1999" name="Comp. Biochem. Physiol.">
        <title>Expression of porcine adipocyte transcripts: tissue distribution and differentiation in vitro and in vivo.</title>
        <authorList>
            <person name="Ding S.T."/>
            <person name="McNeel R.L."/>
            <person name="Mersmann H.J."/>
        </authorList>
    </citation>
    <scope>NUCLEOTIDE SEQUENCE [MRNA] OF 229-372</scope>
</reference>
<reference key="4">
    <citation type="submission" date="2006-03" db="EMBL/GenBank/DDBJ databases">
        <authorList>
            <person name="Chen J.F."/>
            <person name="Jiang S.W."/>
        </authorList>
    </citation>
    <scope>NUCLEOTIDE SEQUENCE [GENOMIC DNA] OF 230-363</scope>
</reference>
<evidence type="ECO:0000250" key="1">
    <source>
        <dbReference type="UniProtKB" id="P36956"/>
    </source>
</evidence>
<evidence type="ECO:0000250" key="2">
    <source>
        <dbReference type="UniProtKB" id="P56720"/>
    </source>
</evidence>
<evidence type="ECO:0000250" key="3">
    <source>
        <dbReference type="UniProtKB" id="Q12772"/>
    </source>
</evidence>
<evidence type="ECO:0000250" key="4">
    <source>
        <dbReference type="UniProtKB" id="Q9WTN3"/>
    </source>
</evidence>
<evidence type="ECO:0000255" key="5"/>
<evidence type="ECO:0000255" key="6">
    <source>
        <dbReference type="PROSITE-ProRule" id="PRU00981"/>
    </source>
</evidence>
<evidence type="ECO:0000256" key="7">
    <source>
        <dbReference type="SAM" id="MobiDB-lite"/>
    </source>
</evidence>
<evidence type="ECO:0000303" key="8">
    <source ref="1"/>
</evidence>
<evidence type="ECO:0000303" key="9">
    <source ref="2"/>
</evidence>
<evidence type="ECO:0000305" key="10"/>
<gene>
    <name type="primary">SREBF1</name>
    <name evidence="8" type="synonym">ADD1</name>
    <name type="synonym">SREBP1</name>
</gene>
<comment type="function">
    <molecule>Sterol regulatory element-binding protein 1</molecule>
    <text evidence="1 4">Precursor of the transcription factor form (Processed sterol regulatory element-binding protein 1), which is embedded in the endoplasmic reticulum membrane (By similarity). Low sterol concentrations promote processing of this form, releasing the transcription factor form that translocates into the nucleus and activates transcription of genes involved in cholesterol biosynthesis and lipid homeostasis (By similarity).</text>
</comment>
<comment type="function">
    <molecule>Processed sterol regulatory element-binding protein 1</molecule>
    <text evidence="1">Key transcription factor that regulates expression of genes involved in cholesterol biosynthesis and lipid homeostasis. Binds to the sterol regulatory element 1 (SRE-1) (5'-ATCACCCCAC-3'). Has dual sequence specificity binding to both an E-box motif (5'-ATCACGTGA-3') and to SRE-1 (5'-ATCACCCCAC-3'). Regulates the promoters of genes involved in cholesterol biosynthesis and the LDL receptor (LDLR) pathway of sterol regulation.</text>
</comment>
<comment type="activity regulation">
    <text evidence="4">Activation by cleavage is down-regulated upon activation of SIRT3-dependent PRKAA1/AMPK-alpha signaling cascade which leads to inhibition of ATP-consuming lipogenesis to restore cellular energy balance.</text>
</comment>
<comment type="subunit">
    <molecule>Processed sterol regulatory element-binding protein 1</molecule>
    <text evidence="1 4">Efficient DNA binding of the soluble transcription factor fragment requires dimerization with another bHLH protein (By similarity). Interacts with CEBPA, the interaction produces a transcriptional synergy. Interacts with LMNA (By similarity).</text>
</comment>
<comment type="subunit">
    <molecule>Sterol regulatory element-binding protein 1</molecule>
    <text evidence="1">Forms a tight complex with SCAP, the SCAP-SREBP complex, in the endoplasmic reticulum membrane and the Golgi apparatus. Interacts with PAQR3; the interaction anchors the SCAP-SREBP complex to the Golgi apparatus in low cholesterol conditions.</text>
</comment>
<comment type="subcellular location">
    <molecule>Sterol regulatory element-binding protein 1</molecule>
    <subcellularLocation>
        <location evidence="1">Endoplasmic reticulum membrane</location>
        <topology evidence="5">Multi-pass membrane protein</topology>
    </subcellularLocation>
    <subcellularLocation>
        <location evidence="4">Golgi apparatus membrane</location>
        <topology evidence="5">Multi-pass membrane protein</topology>
    </subcellularLocation>
    <subcellularLocation>
        <location evidence="4">Cytoplasmic vesicle</location>
        <location evidence="4">COPII-coated vesicle membrane</location>
        <topology evidence="5">Multi-pass membrane protein</topology>
    </subcellularLocation>
    <text evidence="4">At high sterol concentrations, the SCAP-SREBP is retained in the endoplasmic reticulum. Low sterol concentrations promote recruitment into COPII-coated vesicles and transport of the SCAP-SREBP to the Golgi, where it is processed.</text>
</comment>
<comment type="subcellular location">
    <molecule>Processed sterol regulatory element-binding protein 1</molecule>
    <subcellularLocation>
        <location evidence="1">Nucleus</location>
    </subcellularLocation>
</comment>
<comment type="domain">
    <text evidence="1">The 9aaTAD motif is a transactivation domain present in a large number of yeast and animal transcription factors.</text>
</comment>
<comment type="PTM">
    <molecule>Sterol regulatory element-binding protein 1</molecule>
    <text evidence="1">Processed in the Golgi apparatus, releasing the protein from the membrane. At low cholesterol the SCAP-SREBP complex is recruited into COPII vesicles for export from the endoplasmic reticulum. In the Golgi, complex SREBPs are cleaved sequentially by site-1 (MBTPS1, S1P) and site-2 (MBTPS2, S2P) proteases. The first cleavage by site-1 protease occurs within the luminal loop, the second cleavage by site-2 protease occurs within the first transmembrane domain, releasing the transcription factor from the Golgi membrane.</text>
</comment>
<comment type="PTM">
    <text evidence="4">Phosphorylated by AMPK, leading to suppress protein processing and nuclear translocation, and repress target gene expression. Phosphorylation at Ser-403 by SIK1 represses activity possibly by inhibiting DNA-binding.</text>
</comment>
<comment type="PTM">
    <molecule>Sterol regulatory element-binding protein 1</molecule>
    <text evidence="1">SCAP-free SREBF1 is ubiquitinated by the BCR(ARMC5) complex, leading to its degradation.</text>
</comment>
<comment type="PTM">
    <molecule>Processed sterol regulatory element-binding protein 1</molecule>
    <text evidence="1">Ubiquitinated; the nuclear form has a rapid turnover and is rapidly ubiquitinated and degraded by the proteasome in the nucleus.</text>
</comment>
<comment type="similarity">
    <text evidence="10">Belongs to the SREBP family.</text>
</comment>
<proteinExistence type="evidence at transcript level"/>
<organism>
    <name type="scientific">Sus scrofa</name>
    <name type="common">Pig</name>
    <dbReference type="NCBI Taxonomy" id="9823"/>
    <lineage>
        <taxon>Eukaryota</taxon>
        <taxon>Metazoa</taxon>
        <taxon>Chordata</taxon>
        <taxon>Craniata</taxon>
        <taxon>Vertebrata</taxon>
        <taxon>Euteleostomi</taxon>
        <taxon>Mammalia</taxon>
        <taxon>Eutheria</taxon>
        <taxon>Laurasiatheria</taxon>
        <taxon>Artiodactyla</taxon>
        <taxon>Suina</taxon>
        <taxon>Suidae</taxon>
        <taxon>Sus</taxon>
    </lineage>
</organism>
<name>SRBP1_PIG</name>
<dbReference type="EMBL" id="AY496867">
    <property type="protein sequence ID" value="AAS18238.1"/>
    <property type="molecule type" value="mRNA"/>
</dbReference>
<dbReference type="EMBL" id="AY307771">
    <property type="protein sequence ID" value="AAP74567.1"/>
    <property type="molecule type" value="mRNA"/>
</dbReference>
<dbReference type="EMBL" id="AF102873">
    <property type="protein sequence ID" value="AAC78685.1"/>
    <property type="molecule type" value="mRNA"/>
</dbReference>
<dbReference type="EMBL" id="DQ464433">
    <property type="protein sequence ID" value="ABE02287.1"/>
    <property type="molecule type" value="Genomic_DNA"/>
</dbReference>
<dbReference type="RefSeq" id="NP_999322.1">
    <property type="nucleotide sequence ID" value="NM_214157.1"/>
</dbReference>
<dbReference type="SMR" id="O97676"/>
<dbReference type="FunCoup" id="O97676">
    <property type="interactions" value="374"/>
</dbReference>
<dbReference type="STRING" id="9823.ENSSSCP00000034784"/>
<dbReference type="GlyGen" id="O97676">
    <property type="glycosylation" value="4 sites"/>
</dbReference>
<dbReference type="GeneID" id="397308"/>
<dbReference type="KEGG" id="ssc:397308"/>
<dbReference type="CTD" id="6720"/>
<dbReference type="InParanoid" id="O97676"/>
<dbReference type="OrthoDB" id="2133190at2759"/>
<dbReference type="Proteomes" id="UP000008227">
    <property type="component" value="Unplaced"/>
</dbReference>
<dbReference type="Proteomes" id="UP000314985">
    <property type="component" value="Unplaced"/>
</dbReference>
<dbReference type="Proteomes" id="UP000694570">
    <property type="component" value="Unplaced"/>
</dbReference>
<dbReference type="Proteomes" id="UP000694571">
    <property type="component" value="Unplaced"/>
</dbReference>
<dbReference type="Proteomes" id="UP000694720">
    <property type="component" value="Unplaced"/>
</dbReference>
<dbReference type="Proteomes" id="UP000694722">
    <property type="component" value="Unplaced"/>
</dbReference>
<dbReference type="Proteomes" id="UP000694723">
    <property type="component" value="Unplaced"/>
</dbReference>
<dbReference type="Proteomes" id="UP000694724">
    <property type="component" value="Unplaced"/>
</dbReference>
<dbReference type="Proteomes" id="UP000694725">
    <property type="component" value="Unplaced"/>
</dbReference>
<dbReference type="Proteomes" id="UP000694726">
    <property type="component" value="Unplaced"/>
</dbReference>
<dbReference type="Proteomes" id="UP000694727">
    <property type="component" value="Unplaced"/>
</dbReference>
<dbReference type="Proteomes" id="UP000694728">
    <property type="component" value="Unplaced"/>
</dbReference>
<dbReference type="GO" id="GO:0005737">
    <property type="term" value="C:cytoplasm"/>
    <property type="evidence" value="ECO:0000250"/>
    <property type="project" value="UniProtKB"/>
</dbReference>
<dbReference type="GO" id="GO:0005789">
    <property type="term" value="C:endoplasmic reticulum membrane"/>
    <property type="evidence" value="ECO:0007669"/>
    <property type="project" value="UniProtKB-SubCell"/>
</dbReference>
<dbReference type="GO" id="GO:0012507">
    <property type="term" value="C:ER to Golgi transport vesicle membrane"/>
    <property type="evidence" value="ECO:0007669"/>
    <property type="project" value="UniProtKB-SubCell"/>
</dbReference>
<dbReference type="GO" id="GO:0000139">
    <property type="term" value="C:Golgi membrane"/>
    <property type="evidence" value="ECO:0007669"/>
    <property type="project" value="UniProtKB-SubCell"/>
</dbReference>
<dbReference type="GO" id="GO:0005634">
    <property type="term" value="C:nucleus"/>
    <property type="evidence" value="ECO:0000250"/>
    <property type="project" value="UniProtKB"/>
</dbReference>
<dbReference type="GO" id="GO:0003677">
    <property type="term" value="F:DNA binding"/>
    <property type="evidence" value="ECO:0000250"/>
    <property type="project" value="UniProtKB"/>
</dbReference>
<dbReference type="GO" id="GO:0000981">
    <property type="term" value="F:DNA-binding transcription factor activity, RNA polymerase II-specific"/>
    <property type="evidence" value="ECO:0000250"/>
    <property type="project" value="UniProtKB"/>
</dbReference>
<dbReference type="GO" id="GO:0046983">
    <property type="term" value="F:protein dimerization activity"/>
    <property type="evidence" value="ECO:0007669"/>
    <property type="project" value="InterPro"/>
</dbReference>
<dbReference type="GO" id="GO:0000978">
    <property type="term" value="F:RNA polymerase II cis-regulatory region sequence-specific DNA binding"/>
    <property type="evidence" value="ECO:0000318"/>
    <property type="project" value="GO_Central"/>
</dbReference>
<dbReference type="GO" id="GO:0008203">
    <property type="term" value="P:cholesterol metabolic process"/>
    <property type="evidence" value="ECO:0007669"/>
    <property type="project" value="UniProtKB-KW"/>
</dbReference>
<dbReference type="GO" id="GO:0008610">
    <property type="term" value="P:lipid biosynthetic process"/>
    <property type="evidence" value="ECO:0000250"/>
    <property type="project" value="UniProtKB"/>
</dbReference>
<dbReference type="GO" id="GO:0010867">
    <property type="term" value="P:positive regulation of triglyceride biosynthetic process"/>
    <property type="evidence" value="ECO:0000250"/>
    <property type="project" value="UniProtKB"/>
</dbReference>
<dbReference type="GO" id="GO:0006355">
    <property type="term" value="P:regulation of DNA-templated transcription"/>
    <property type="evidence" value="ECO:0000250"/>
    <property type="project" value="UniProtKB"/>
</dbReference>
<dbReference type="GO" id="GO:0006357">
    <property type="term" value="P:regulation of transcription by RNA polymerase II"/>
    <property type="evidence" value="ECO:0000318"/>
    <property type="project" value="GO_Central"/>
</dbReference>
<dbReference type="CDD" id="cd18921">
    <property type="entry name" value="bHLHzip_SREBP1"/>
    <property type="match status" value="1"/>
</dbReference>
<dbReference type="FunFam" id="4.10.280.10:FF:000016">
    <property type="entry name" value="Sterol regulatory element-binding transcription factor 1"/>
    <property type="match status" value="1"/>
</dbReference>
<dbReference type="Gene3D" id="4.10.280.10">
    <property type="entry name" value="Helix-loop-helix DNA-binding domain"/>
    <property type="match status" value="1"/>
</dbReference>
<dbReference type="InterPro" id="IPR011598">
    <property type="entry name" value="bHLH_dom"/>
</dbReference>
<dbReference type="InterPro" id="IPR036638">
    <property type="entry name" value="HLH_DNA-bd_sf"/>
</dbReference>
<dbReference type="PANTHER" id="PTHR46062">
    <property type="entry name" value="STEROL REGULATORY ELEMENT-BINDING PROTEIN"/>
    <property type="match status" value="1"/>
</dbReference>
<dbReference type="PANTHER" id="PTHR46062:SF2">
    <property type="entry name" value="STEROL REGULATORY ELEMENT-BINDING PROTEIN 1"/>
    <property type="match status" value="1"/>
</dbReference>
<dbReference type="Pfam" id="PF00010">
    <property type="entry name" value="HLH"/>
    <property type="match status" value="1"/>
</dbReference>
<dbReference type="SMART" id="SM00353">
    <property type="entry name" value="HLH"/>
    <property type="match status" value="1"/>
</dbReference>
<dbReference type="SUPFAM" id="SSF47459">
    <property type="entry name" value="HLH, helix-loop-helix DNA-binding domain"/>
    <property type="match status" value="1"/>
</dbReference>
<dbReference type="PROSITE" id="PS50888">
    <property type="entry name" value="BHLH"/>
    <property type="match status" value="1"/>
</dbReference>
<feature type="chain" id="PRO_0000127449" description="Sterol regulatory element-binding protein 1">
    <location>
        <begin position="1"/>
        <end position="1151"/>
    </location>
</feature>
<feature type="chain" id="PRO_0000317058" description="Processed sterol regulatory element-binding protein 1" evidence="3">
    <location>
        <begin position="1"/>
        <end position="490"/>
    </location>
</feature>
<feature type="topological domain" description="Cytoplasmic" evidence="5">
    <location>
        <begin position="1"/>
        <end position="487"/>
    </location>
</feature>
<feature type="transmembrane region" description="Helical" evidence="5">
    <location>
        <begin position="488"/>
        <end position="508"/>
    </location>
</feature>
<feature type="topological domain" description="Lumenal" evidence="5">
    <location>
        <begin position="509"/>
        <end position="547"/>
    </location>
</feature>
<feature type="transmembrane region" description="Helical" evidence="5">
    <location>
        <begin position="548"/>
        <end position="568"/>
    </location>
</feature>
<feature type="topological domain" description="Cytoplasmic" evidence="5">
    <location>
        <begin position="569"/>
        <end position="1151"/>
    </location>
</feature>
<feature type="domain" description="bHLH" evidence="6">
    <location>
        <begin position="324"/>
        <end position="374"/>
    </location>
</feature>
<feature type="region of interest" description="Transcriptional activation (acidic)" evidence="1">
    <location>
        <begin position="1"/>
        <end position="59"/>
    </location>
</feature>
<feature type="region of interest" description="Disordered" evidence="7">
    <location>
        <begin position="39"/>
        <end position="125"/>
    </location>
</feature>
<feature type="region of interest" description="Disordered" evidence="7">
    <location>
        <begin position="164"/>
        <end position="184"/>
    </location>
</feature>
<feature type="region of interest" description="Interaction with LMNA" evidence="4">
    <location>
        <begin position="234"/>
        <end position="497"/>
    </location>
</feature>
<feature type="region of interest" description="Leucine-zipper">
    <location>
        <begin position="374"/>
        <end position="396"/>
    </location>
</feature>
<feature type="region of interest" description="Disordered" evidence="7">
    <location>
        <begin position="399"/>
        <end position="479"/>
    </location>
</feature>
<feature type="region of interest" description="Disordered" evidence="7">
    <location>
        <begin position="987"/>
        <end position="1006"/>
    </location>
</feature>
<feature type="short sequence motif" description="9aaTAD" evidence="1">
    <location>
        <begin position="27"/>
        <end position="35"/>
    </location>
</feature>
<feature type="compositionally biased region" description="Low complexity" evidence="7">
    <location>
        <begin position="57"/>
        <end position="69"/>
    </location>
</feature>
<feature type="compositionally biased region" description="Pro residues" evidence="7">
    <location>
        <begin position="91"/>
        <end position="105"/>
    </location>
</feature>
<feature type="compositionally biased region" description="Polar residues" evidence="7">
    <location>
        <begin position="170"/>
        <end position="184"/>
    </location>
</feature>
<feature type="compositionally biased region" description="Low complexity" evidence="7">
    <location>
        <begin position="431"/>
        <end position="448"/>
    </location>
</feature>
<feature type="compositionally biased region" description="Low complexity" evidence="7">
    <location>
        <begin position="995"/>
        <end position="1006"/>
    </location>
</feature>
<feature type="site" description="Cleavage; by caspase-3 and caspase-7" evidence="3">
    <location>
        <begin position="460"/>
        <end position="461"/>
    </location>
</feature>
<feature type="site" description="Cleavage; by MBTPS2" evidence="3">
    <location>
        <begin position="490"/>
        <end position="491"/>
    </location>
</feature>
<feature type="site" description="Cleavage; by MBTPS1" evidence="1">
    <location>
        <begin position="530"/>
        <end position="531"/>
    </location>
</feature>
<feature type="modified residue" description="Phosphoserine" evidence="2">
    <location>
        <position position="98"/>
    </location>
</feature>
<feature type="modified residue" description="Phosphoserine" evidence="1">
    <location>
        <position position="117"/>
    </location>
</feature>
<feature type="modified residue" description="Phosphoserine; by SIK1" evidence="4">
    <location>
        <position position="338"/>
    </location>
</feature>
<feature type="modified residue" description="Phosphoserine; by SIK1" evidence="4">
    <location>
        <position position="339"/>
    </location>
</feature>
<feature type="modified residue" description="Phosphoserine; by AMPK" evidence="4">
    <location>
        <position position="397"/>
    </location>
</feature>
<feature type="modified residue" description="Phosphoserine; by SIK1" evidence="4">
    <location>
        <position position="403"/>
    </location>
</feature>
<feature type="modified residue" description="Phosphoserine" evidence="4">
    <location>
        <position position="457"/>
    </location>
</feature>
<feature type="modified residue" description="Phosphoserine" evidence="1">
    <location>
        <position position="1060"/>
    </location>
</feature>
<feature type="sequence conflict" description="In Ref. 2; AAP74567." evidence="10" ref="2">
    <original>L</original>
    <variation>P</variation>
    <location>
        <position position="197"/>
    </location>
</feature>